<sequence>MKQVCVLGNGQLGRMLRQAGEPLGIAVWPVGLDAEPAAVPFQQSVITAEIERWPETALTRELARHPAFVNRDVFPIIADRLTQKQLFDKLHLPTAPWQLLAERSEWPAVFDRLGELAIVKRRTGGYDGRGQWRLRANETEQLPAECYGECIVEQGINFSGEVSLVGARGFDGSTVFYPLTHNLHQDGILRTSVAFPQANAQQQAQAEEMLSAIMQELGYVGVMAMECFVTPQGLLINELAPRVHNSGHWTQNGASISQFELHLRAITDLPLPQPVVNNPSVMINLIGSDVNYDWLKLPLVHLHWYDKEVRPGRKVGHLNLTDSDTSRLTATLEALIPLLPPEYASGVIWAQSKFG</sequence>
<feature type="chain" id="PRO_0000074997" description="N5-carboxyaminoimidazole ribonucleotide synthase">
    <location>
        <begin position="1"/>
        <end position="355"/>
    </location>
</feature>
<feature type="domain" description="ATP-grasp" evidence="1">
    <location>
        <begin position="84"/>
        <end position="267"/>
    </location>
</feature>
<feature type="binding site" evidence="1 2 3">
    <location>
        <position position="80"/>
    </location>
    <ligand>
        <name>ATP</name>
        <dbReference type="ChEBI" id="CHEBI:30616"/>
    </ligand>
</feature>
<feature type="binding site" evidence="1 2 3">
    <location>
        <position position="120"/>
    </location>
    <ligand>
        <name>ATP</name>
        <dbReference type="ChEBI" id="CHEBI:30616"/>
    </ligand>
</feature>
<feature type="binding site" evidence="1 2 3">
    <location>
        <begin position="125"/>
        <end position="131"/>
    </location>
    <ligand>
        <name>ATP</name>
        <dbReference type="ChEBI" id="CHEBI:30616"/>
    </ligand>
</feature>
<feature type="binding site" evidence="1 2 3">
    <location>
        <begin position="153"/>
        <end position="156"/>
    </location>
    <ligand>
        <name>ATP</name>
        <dbReference type="ChEBI" id="CHEBI:30616"/>
    </ligand>
</feature>
<feature type="binding site" evidence="1 2 3">
    <location>
        <position position="161"/>
    </location>
    <ligand>
        <name>ATP</name>
        <dbReference type="ChEBI" id="CHEBI:30616"/>
    </ligand>
</feature>
<feature type="binding site" evidence="1 2 3">
    <location>
        <position position="184"/>
    </location>
    <ligand>
        <name>ATP</name>
        <dbReference type="ChEBI" id="CHEBI:30616"/>
    </ligand>
</feature>
<feature type="binding site" evidence="1 2 3">
    <location>
        <begin position="237"/>
        <end position="238"/>
    </location>
    <ligand>
        <name>ATP</name>
        <dbReference type="ChEBI" id="CHEBI:30616"/>
    </ligand>
</feature>
<feature type="sequence conflict" description="In Ref. 1; CAA31421." evidence="5" ref="1">
    <original>RH</original>
    <variation>PD</variation>
    <location>
        <begin position="64"/>
        <end position="65"/>
    </location>
</feature>
<feature type="strand" evidence="10">
    <location>
        <begin position="3"/>
        <end position="8"/>
    </location>
</feature>
<feature type="helix" evidence="10">
    <location>
        <begin position="11"/>
        <end position="20"/>
    </location>
</feature>
<feature type="helix" evidence="10">
    <location>
        <begin position="21"/>
        <end position="23"/>
    </location>
</feature>
<feature type="strand" evidence="10">
    <location>
        <begin position="26"/>
        <end position="30"/>
    </location>
</feature>
<feature type="helix" evidence="10">
    <location>
        <begin position="36"/>
        <end position="38"/>
    </location>
</feature>
<feature type="helix" evidence="11">
    <location>
        <begin position="41"/>
        <end position="43"/>
    </location>
</feature>
<feature type="strand" evidence="10">
    <location>
        <begin position="44"/>
        <end position="49"/>
    </location>
</feature>
<feature type="helix" evidence="10">
    <location>
        <begin position="57"/>
        <end position="63"/>
    </location>
</feature>
<feature type="turn" evidence="10">
    <location>
        <begin position="69"/>
        <end position="72"/>
    </location>
</feature>
<feature type="helix" evidence="10">
    <location>
        <begin position="73"/>
        <end position="78"/>
    </location>
</feature>
<feature type="helix" evidence="10">
    <location>
        <begin position="80"/>
        <end position="89"/>
    </location>
</feature>
<feature type="strand" evidence="10">
    <location>
        <begin position="97"/>
        <end position="100"/>
    </location>
</feature>
<feature type="helix" evidence="10">
    <location>
        <begin position="103"/>
        <end position="105"/>
    </location>
</feature>
<feature type="helix" evidence="10">
    <location>
        <begin position="106"/>
        <end position="113"/>
    </location>
</feature>
<feature type="strand" evidence="10">
    <location>
        <begin position="115"/>
        <end position="124"/>
    </location>
</feature>
<feature type="turn" evidence="10">
    <location>
        <begin position="127"/>
        <end position="130"/>
    </location>
</feature>
<feature type="strand" evidence="10">
    <location>
        <begin position="131"/>
        <end position="135"/>
    </location>
</feature>
<feature type="turn" evidence="9">
    <location>
        <begin position="136"/>
        <end position="138"/>
    </location>
</feature>
<feature type="helix" evidence="10">
    <location>
        <begin position="139"/>
        <end position="141"/>
    </location>
</feature>
<feature type="helix" evidence="10">
    <location>
        <begin position="144"/>
        <end position="146"/>
    </location>
</feature>
<feature type="turn" evidence="10">
    <location>
        <begin position="147"/>
        <end position="149"/>
    </location>
</feature>
<feature type="strand" evidence="10">
    <location>
        <begin position="150"/>
        <end position="154"/>
    </location>
</feature>
<feature type="strand" evidence="10">
    <location>
        <begin position="159"/>
        <end position="168"/>
    </location>
</feature>
<feature type="strand" evidence="10">
    <location>
        <begin position="174"/>
        <end position="176"/>
    </location>
</feature>
<feature type="strand" evidence="10">
    <location>
        <begin position="180"/>
        <end position="185"/>
    </location>
</feature>
<feature type="strand" evidence="10">
    <location>
        <begin position="188"/>
        <end position="194"/>
    </location>
</feature>
<feature type="helix" evidence="10">
    <location>
        <begin position="200"/>
        <end position="217"/>
    </location>
</feature>
<feature type="strand" evidence="10">
    <location>
        <begin position="221"/>
        <end position="230"/>
    </location>
</feature>
<feature type="strand" evidence="10">
    <location>
        <begin position="233"/>
        <end position="242"/>
    </location>
</feature>
<feature type="helix" evidence="10">
    <location>
        <begin position="245"/>
        <end position="249"/>
    </location>
</feature>
<feature type="helix" evidence="10">
    <location>
        <begin position="250"/>
        <end position="253"/>
    </location>
</feature>
<feature type="strand" evidence="10">
    <location>
        <begin position="254"/>
        <end position="256"/>
    </location>
</feature>
<feature type="helix" evidence="10">
    <location>
        <begin position="258"/>
        <end position="266"/>
    </location>
</feature>
<feature type="strand" evidence="10">
    <location>
        <begin position="280"/>
        <end position="287"/>
    </location>
</feature>
<feature type="helix" evidence="10">
    <location>
        <begin position="292"/>
        <end position="296"/>
    </location>
</feature>
<feature type="strand" evidence="10">
    <location>
        <begin position="301"/>
        <end position="304"/>
    </location>
</feature>
<feature type="strand" evidence="10">
    <location>
        <begin position="314"/>
        <end position="321"/>
    </location>
</feature>
<feature type="helix" evidence="10">
    <location>
        <begin position="325"/>
        <end position="335"/>
    </location>
</feature>
<feature type="helix" evidence="10">
    <location>
        <begin position="336"/>
        <end position="338"/>
    </location>
</feature>
<feature type="helix" evidence="10">
    <location>
        <begin position="341"/>
        <end position="343"/>
    </location>
</feature>
<feature type="helix" evidence="10">
    <location>
        <begin position="344"/>
        <end position="353"/>
    </location>
</feature>
<evidence type="ECO:0000255" key="1">
    <source>
        <dbReference type="HAMAP-Rule" id="MF_01928"/>
    </source>
</evidence>
<evidence type="ECO:0000269" key="2">
    <source>
    </source>
</evidence>
<evidence type="ECO:0000269" key="3">
    <source>
    </source>
</evidence>
<evidence type="ECO:0000269" key="4">
    <source>
    </source>
</evidence>
<evidence type="ECO:0000305" key="5"/>
<evidence type="ECO:0000305" key="6">
    <source>
    </source>
</evidence>
<evidence type="ECO:0000312" key="7">
    <source>
        <dbReference type="EMBL" id="AAC73624.1"/>
    </source>
</evidence>
<evidence type="ECO:0000312" key="8">
    <source>
        <dbReference type="EMBL" id="BAE76299.1"/>
    </source>
</evidence>
<evidence type="ECO:0007829" key="9">
    <source>
        <dbReference type="PDB" id="1B6S"/>
    </source>
</evidence>
<evidence type="ECO:0007829" key="10">
    <source>
        <dbReference type="PDB" id="3ETH"/>
    </source>
</evidence>
<evidence type="ECO:0007829" key="11">
    <source>
        <dbReference type="PDB" id="3ETJ"/>
    </source>
</evidence>
<reference key="1">
    <citation type="journal article" date="1989" name="J. Bacteriol.">
        <title>Nucleotide sequence analysis of the purEK operon encoding 5'-phosphoribosyl-5-aminoimidazole carboxylase of Escherichia coli K-12.</title>
        <authorList>
            <person name="Tiedeman A.A."/>
            <person name="Keyhani J."/>
            <person name="Kamholz J."/>
            <person name="Daum H.A. III"/>
            <person name="Gots J.S."/>
            <person name="Smith J.M."/>
        </authorList>
    </citation>
    <scope>NUCLEOTIDE SEQUENCE [GENOMIC DNA]</scope>
    <source>
        <strain>K12</strain>
    </source>
</reference>
<reference key="2">
    <citation type="journal article" date="1989" name="J. Bacteriol.">
        <title>Identification and sequence analysis of Escherichia coli purE and purK genes encoding 5'-phosphoribosyl-5-amino-4-imidazole carboxylase for de novo purine biosynthesis.</title>
        <authorList>
            <person name="Watanabe W."/>
            <person name="Sampei G."/>
            <person name="Aiba A."/>
            <person name="Mizobuchi K."/>
        </authorList>
    </citation>
    <scope>NUCLEOTIDE SEQUENCE [GENOMIC DNA]</scope>
</reference>
<reference key="3">
    <citation type="submission" date="1997-01" db="EMBL/GenBank/DDBJ databases">
        <title>Sequence of minutes 4-25 of Escherichia coli.</title>
        <authorList>
            <person name="Chung E."/>
            <person name="Allen E."/>
            <person name="Araujo R."/>
            <person name="Aparicio A.M."/>
            <person name="Davis K."/>
            <person name="Duncan M."/>
            <person name="Federspiel N."/>
            <person name="Hyman R."/>
            <person name="Kalman S."/>
            <person name="Komp C."/>
            <person name="Kurdi O."/>
            <person name="Lew H."/>
            <person name="Lin D."/>
            <person name="Namath A."/>
            <person name="Oefner P."/>
            <person name="Roberts D."/>
            <person name="Schramm S."/>
            <person name="Davis R.W."/>
        </authorList>
    </citation>
    <scope>NUCLEOTIDE SEQUENCE [LARGE SCALE GENOMIC DNA]</scope>
    <source>
        <strain>K12 / MG1655 / ATCC 47076</strain>
    </source>
</reference>
<reference key="4">
    <citation type="journal article" date="1997" name="Science">
        <title>The complete genome sequence of Escherichia coli K-12.</title>
        <authorList>
            <person name="Blattner F.R."/>
            <person name="Plunkett G. III"/>
            <person name="Bloch C.A."/>
            <person name="Perna N.T."/>
            <person name="Burland V."/>
            <person name="Riley M."/>
            <person name="Collado-Vides J."/>
            <person name="Glasner J.D."/>
            <person name="Rode C.K."/>
            <person name="Mayhew G.F."/>
            <person name="Gregor J."/>
            <person name="Davis N.W."/>
            <person name="Kirkpatrick H.A."/>
            <person name="Goeden M.A."/>
            <person name="Rose D.J."/>
            <person name="Mau B."/>
            <person name="Shao Y."/>
        </authorList>
    </citation>
    <scope>NUCLEOTIDE SEQUENCE [LARGE SCALE GENOMIC DNA]</scope>
    <source>
        <strain>K12 / MG1655 / ATCC 47076</strain>
    </source>
</reference>
<reference key="5">
    <citation type="journal article" date="2006" name="Mol. Syst. Biol.">
        <title>Highly accurate genome sequences of Escherichia coli K-12 strains MG1655 and W3110.</title>
        <authorList>
            <person name="Hayashi K."/>
            <person name="Morooka N."/>
            <person name="Yamamoto Y."/>
            <person name="Fujita K."/>
            <person name="Isono K."/>
            <person name="Choi S."/>
            <person name="Ohtsubo E."/>
            <person name="Baba T."/>
            <person name="Wanner B.L."/>
            <person name="Mori H."/>
            <person name="Horiuchi T."/>
        </authorList>
    </citation>
    <scope>NUCLEOTIDE SEQUENCE [LARGE SCALE GENOMIC DNA]</scope>
    <source>
        <strain>K12 / W3110 / ATCC 27325 / DSM 5911</strain>
    </source>
</reference>
<reference key="6">
    <citation type="journal article" date="1992" name="Biochemistry">
        <title>Purification and characterization of the purE, purK, and purC gene products: identification of a previously unrecognized energy requirement in the purine biosynthetic pathway.</title>
        <authorList>
            <person name="Meyer E."/>
            <person name="Leonard N.J."/>
            <person name="Bhat B."/>
            <person name="Stubbe J."/>
            <person name="Smith J.M."/>
        </authorList>
    </citation>
    <scope>PROTEIN SEQUENCE OF 1-20</scope>
</reference>
<reference key="7">
    <citation type="journal article" date="1994" name="Biochemistry">
        <title>N5-carboxyaminoimidazole ribonucleotide: evidence for a new intermediate and two new enzymatic activities in the de novo purine biosynthetic pathway of Escherichia coli.</title>
        <authorList>
            <person name="Mueller E.J."/>
            <person name="Meyer E."/>
            <person name="Rudolph J."/>
            <person name="Davisson V.J."/>
            <person name="Stubbe J."/>
        </authorList>
    </citation>
    <scope>FUNCTION</scope>
    <scope>CATALYTIC ACTIVITY</scope>
    <scope>SUBSTRATE SPECIFICITY</scope>
    <scope>PATHWAY</scope>
</reference>
<reference key="8">
    <citation type="journal article" date="1999" name="Biochemistry">
        <title>Three-dimensional structure of N5-carboxyaminoimidazole ribonucleotide synthetase: a member of the ATP grasp protein superfamily.</title>
        <authorList>
            <person name="Thoden J.B."/>
            <person name="Kappock T.J."/>
            <person name="Stubbe J."/>
            <person name="Holden H.M."/>
        </authorList>
    </citation>
    <scope>X-RAY CRYSTALLOGRAPHY (2.1 ANGSTROMS) IN COMPLEX WITH ATP ANALOG</scope>
    <scope>SUBUNIT</scope>
</reference>
<reference key="9">
    <citation type="journal article" date="2008" name="Biochemistry">
        <title>Structural analysis of the active site geometry of N5-carboxyaminoimidazole ribonucleotide synthetase from Escherichia coli.</title>
        <authorList>
            <person name="Thoden J.B."/>
            <person name="Holden H.M."/>
            <person name="Firestine S.M."/>
        </authorList>
    </citation>
    <scope>X-RAY CRYSTALLOGRAPHY (1.60 ANGSTROMS) IN COMPLEX WITH ATP</scope>
    <scope>SUBUNIT</scope>
    <source>
        <strain>K12 / W3110 / ATCC 27325 / DSM 5911</strain>
    </source>
</reference>
<accession>P09029</accession>
<accession>Q2MBQ7</accession>
<organism>
    <name type="scientific">Escherichia coli (strain K12)</name>
    <dbReference type="NCBI Taxonomy" id="83333"/>
    <lineage>
        <taxon>Bacteria</taxon>
        <taxon>Pseudomonadati</taxon>
        <taxon>Pseudomonadota</taxon>
        <taxon>Gammaproteobacteria</taxon>
        <taxon>Enterobacterales</taxon>
        <taxon>Enterobacteriaceae</taxon>
        <taxon>Escherichia</taxon>
    </lineage>
</organism>
<gene>
    <name evidence="1" type="primary">purK</name>
    <name evidence="7" type="ordered locus">b0522</name>
    <name evidence="8" type="ordered locus">JW0511</name>
</gene>
<proteinExistence type="evidence at protein level"/>
<name>PURK_ECOLI</name>
<protein>
    <recommendedName>
        <fullName evidence="1 5">N5-carboxyaminoimidazole ribonucleotide synthase</fullName>
        <shortName evidence="1 5">N5-CAIR synthase</shortName>
        <ecNumber evidence="1 4">6.3.4.18</ecNumber>
    </recommendedName>
    <alternativeName>
        <fullName evidence="1 5">5-(carboxyamino)imidazole ribonucleotide synthetase</fullName>
    </alternativeName>
</protein>
<comment type="function">
    <text evidence="1 4">Catalyzes the ATP-dependent conversion of 5-aminoimidazole ribonucleotide (AIR) and HCO(3)(-) to N5-carboxyaminoimidazole ribonucleotide (N5-CAIR).</text>
</comment>
<comment type="catalytic activity">
    <reaction evidence="1 4">
        <text>5-amino-1-(5-phospho-beta-D-ribosyl)imidazole + hydrogencarbonate + ATP = 5-carboxyamino-1-(5-phospho-D-ribosyl)imidazole + ADP + phosphate + 2 H(+)</text>
        <dbReference type="Rhea" id="RHEA:19317"/>
        <dbReference type="ChEBI" id="CHEBI:15378"/>
        <dbReference type="ChEBI" id="CHEBI:17544"/>
        <dbReference type="ChEBI" id="CHEBI:30616"/>
        <dbReference type="ChEBI" id="CHEBI:43474"/>
        <dbReference type="ChEBI" id="CHEBI:58730"/>
        <dbReference type="ChEBI" id="CHEBI:137981"/>
        <dbReference type="ChEBI" id="CHEBI:456216"/>
        <dbReference type="EC" id="6.3.4.18"/>
    </reaction>
</comment>
<comment type="pathway">
    <text evidence="1 4">Purine metabolism; IMP biosynthesis via de novo pathway; 5-amino-1-(5-phospho-D-ribosyl)imidazole-4-carboxylate from 5-amino-1-(5-phospho-D-ribosyl)imidazole (N5-CAIR route): step 1/2.</text>
</comment>
<comment type="subunit">
    <text evidence="1 2 3">Homodimer.</text>
</comment>
<comment type="similarity">
    <text evidence="1 5">Belongs to the PurK/PurT family.</text>
</comment>
<comment type="caution">
    <text evidence="6">Was originally thought to be the ATPase subunit of phosphoribosylaminoimidazole carboxylase, with catalytic subunit PurE.</text>
</comment>
<keyword id="KW-0002">3D-structure</keyword>
<keyword id="KW-0067">ATP-binding</keyword>
<keyword id="KW-0903">Direct protein sequencing</keyword>
<keyword id="KW-0436">Ligase</keyword>
<keyword id="KW-0547">Nucleotide-binding</keyword>
<keyword id="KW-0658">Purine biosynthesis</keyword>
<keyword id="KW-1185">Reference proteome</keyword>
<dbReference type="EC" id="6.3.4.18" evidence="1 4"/>
<dbReference type="EMBL" id="X12982">
    <property type="protein sequence ID" value="CAA31421.1"/>
    <property type="molecule type" value="Genomic_DNA"/>
</dbReference>
<dbReference type="EMBL" id="M19657">
    <property type="protein sequence ID" value="AAA24450.1"/>
    <property type="molecule type" value="Genomic_DNA"/>
</dbReference>
<dbReference type="EMBL" id="U82664">
    <property type="protein sequence ID" value="AAB40275.1"/>
    <property type="molecule type" value="Genomic_DNA"/>
</dbReference>
<dbReference type="EMBL" id="U00096">
    <property type="protein sequence ID" value="AAC73624.1"/>
    <property type="molecule type" value="Genomic_DNA"/>
</dbReference>
<dbReference type="EMBL" id="AP009048">
    <property type="protein sequence ID" value="BAE76299.1"/>
    <property type="molecule type" value="Genomic_DNA"/>
</dbReference>
<dbReference type="PIR" id="JU0001">
    <property type="entry name" value="DCECPK"/>
</dbReference>
<dbReference type="RefSeq" id="NP_415055.1">
    <property type="nucleotide sequence ID" value="NC_000913.3"/>
</dbReference>
<dbReference type="RefSeq" id="WP_000815571.1">
    <property type="nucleotide sequence ID" value="NZ_LN832404.1"/>
</dbReference>
<dbReference type="PDB" id="1B6R">
    <property type="method" value="X-ray"/>
    <property type="resolution" value="2.10 A"/>
    <property type="chains" value="A=1-355"/>
</dbReference>
<dbReference type="PDB" id="1B6S">
    <property type="method" value="X-ray"/>
    <property type="resolution" value="2.50 A"/>
    <property type="chains" value="A/B/C/D=1-355"/>
</dbReference>
<dbReference type="PDB" id="3ETH">
    <property type="method" value="X-ray"/>
    <property type="resolution" value="1.60 A"/>
    <property type="chains" value="A/B=1-355"/>
</dbReference>
<dbReference type="PDB" id="3ETJ">
    <property type="method" value="X-ray"/>
    <property type="resolution" value="1.60 A"/>
    <property type="chains" value="A/B=1-355"/>
</dbReference>
<dbReference type="PDBsum" id="1B6R"/>
<dbReference type="PDBsum" id="1B6S"/>
<dbReference type="PDBsum" id="3ETH"/>
<dbReference type="PDBsum" id="3ETJ"/>
<dbReference type="SMR" id="P09029"/>
<dbReference type="BioGRID" id="4259875">
    <property type="interactions" value="22"/>
</dbReference>
<dbReference type="BioGRID" id="849541">
    <property type="interactions" value="9"/>
</dbReference>
<dbReference type="FunCoup" id="P09029">
    <property type="interactions" value="568"/>
</dbReference>
<dbReference type="IntAct" id="P09029">
    <property type="interactions" value="5"/>
</dbReference>
<dbReference type="STRING" id="511145.b0522"/>
<dbReference type="jPOST" id="P09029"/>
<dbReference type="PaxDb" id="511145-b0522"/>
<dbReference type="EnsemblBacteria" id="AAC73624">
    <property type="protein sequence ID" value="AAC73624"/>
    <property type="gene ID" value="b0522"/>
</dbReference>
<dbReference type="GeneID" id="945153"/>
<dbReference type="KEGG" id="ecj:JW0511"/>
<dbReference type="KEGG" id="eco:b0522"/>
<dbReference type="KEGG" id="ecoc:C3026_02560"/>
<dbReference type="PATRIC" id="fig|1411691.4.peg.1756"/>
<dbReference type="EchoBASE" id="EB0789"/>
<dbReference type="eggNOG" id="COG0026">
    <property type="taxonomic scope" value="Bacteria"/>
</dbReference>
<dbReference type="HOGENOM" id="CLU_011534_0_0_6"/>
<dbReference type="InParanoid" id="P09029"/>
<dbReference type="OMA" id="ITFDHEH"/>
<dbReference type="OrthoDB" id="9804625at2"/>
<dbReference type="PhylomeDB" id="P09029"/>
<dbReference type="BioCyc" id="EcoCyc:PURK-MONOMER"/>
<dbReference type="BioCyc" id="MetaCyc:PURK-MONOMER"/>
<dbReference type="BRENDA" id="6.3.4.18">
    <property type="organism ID" value="2026"/>
</dbReference>
<dbReference type="SABIO-RK" id="P09029"/>
<dbReference type="UniPathway" id="UPA00074">
    <property type="reaction ID" value="UER00942"/>
</dbReference>
<dbReference type="EvolutionaryTrace" id="P09029"/>
<dbReference type="PRO" id="PR:P09029"/>
<dbReference type="Proteomes" id="UP000000625">
    <property type="component" value="Chromosome"/>
</dbReference>
<dbReference type="GO" id="GO:0005829">
    <property type="term" value="C:cytosol"/>
    <property type="evidence" value="ECO:0000314"/>
    <property type="project" value="EcoCyc"/>
</dbReference>
<dbReference type="GO" id="GO:0034028">
    <property type="term" value="F:5-(carboxyamino)imidazole ribonucleotide synthase activity"/>
    <property type="evidence" value="ECO:0000314"/>
    <property type="project" value="EcoCyc"/>
</dbReference>
<dbReference type="GO" id="GO:0005524">
    <property type="term" value="F:ATP binding"/>
    <property type="evidence" value="ECO:0000314"/>
    <property type="project" value="EcoCyc"/>
</dbReference>
<dbReference type="GO" id="GO:0046872">
    <property type="term" value="F:metal ion binding"/>
    <property type="evidence" value="ECO:0007669"/>
    <property type="project" value="InterPro"/>
</dbReference>
<dbReference type="GO" id="GO:0004638">
    <property type="term" value="F:phosphoribosylaminoimidazole carboxylase activity"/>
    <property type="evidence" value="ECO:0000314"/>
    <property type="project" value="EcoliWiki"/>
</dbReference>
<dbReference type="GO" id="GO:0006189">
    <property type="term" value="P:'de novo' IMP biosynthetic process"/>
    <property type="evidence" value="ECO:0007669"/>
    <property type="project" value="UniProtKB-UniRule"/>
</dbReference>
<dbReference type="FunFam" id="3.30.1490.20:FF:000021">
    <property type="entry name" value="N5-carboxyaminoimidazole ribonucleotide synthase"/>
    <property type="match status" value="1"/>
</dbReference>
<dbReference type="FunFam" id="3.30.470.20:FF:000034">
    <property type="entry name" value="N5-carboxyaminoimidazole ribonucleotide synthase"/>
    <property type="match status" value="1"/>
</dbReference>
<dbReference type="FunFam" id="3.40.50.20:FF:000017">
    <property type="entry name" value="N5-carboxyaminoimidazole ribonucleotide synthase"/>
    <property type="match status" value="1"/>
</dbReference>
<dbReference type="Gene3D" id="3.40.50.20">
    <property type="match status" value="1"/>
</dbReference>
<dbReference type="Gene3D" id="3.30.1490.20">
    <property type="entry name" value="ATP-grasp fold, A domain"/>
    <property type="match status" value="1"/>
</dbReference>
<dbReference type="Gene3D" id="3.30.470.20">
    <property type="entry name" value="ATP-grasp fold, B domain"/>
    <property type="match status" value="1"/>
</dbReference>
<dbReference type="HAMAP" id="MF_01928">
    <property type="entry name" value="PurK"/>
    <property type="match status" value="1"/>
</dbReference>
<dbReference type="InterPro" id="IPR011761">
    <property type="entry name" value="ATP-grasp"/>
</dbReference>
<dbReference type="InterPro" id="IPR003135">
    <property type="entry name" value="ATP-grasp_carboxylate-amine"/>
</dbReference>
<dbReference type="InterPro" id="IPR013815">
    <property type="entry name" value="ATP_grasp_subdomain_1"/>
</dbReference>
<dbReference type="InterPro" id="IPR016185">
    <property type="entry name" value="PreATP-grasp_dom_sf"/>
</dbReference>
<dbReference type="InterPro" id="IPR005875">
    <property type="entry name" value="PurK"/>
</dbReference>
<dbReference type="InterPro" id="IPR040686">
    <property type="entry name" value="PurK_C"/>
</dbReference>
<dbReference type="InterPro" id="IPR054350">
    <property type="entry name" value="PurT/PurK_preATP-grasp"/>
</dbReference>
<dbReference type="InterPro" id="IPR011054">
    <property type="entry name" value="Rudment_hybrid_motif"/>
</dbReference>
<dbReference type="NCBIfam" id="NF004678">
    <property type="entry name" value="PRK06019.1-4"/>
    <property type="match status" value="1"/>
</dbReference>
<dbReference type="NCBIfam" id="TIGR01161">
    <property type="entry name" value="purK"/>
    <property type="match status" value="1"/>
</dbReference>
<dbReference type="PANTHER" id="PTHR11609:SF5">
    <property type="entry name" value="PHOSPHORIBOSYLAMINOIMIDAZOLE CARBOXYLASE"/>
    <property type="match status" value="1"/>
</dbReference>
<dbReference type="PANTHER" id="PTHR11609">
    <property type="entry name" value="PURINE BIOSYNTHESIS PROTEIN 6/7, PUR6/7"/>
    <property type="match status" value="1"/>
</dbReference>
<dbReference type="Pfam" id="PF02222">
    <property type="entry name" value="ATP-grasp"/>
    <property type="match status" value="1"/>
</dbReference>
<dbReference type="Pfam" id="PF17769">
    <property type="entry name" value="PurK_C"/>
    <property type="match status" value="1"/>
</dbReference>
<dbReference type="Pfam" id="PF22660">
    <property type="entry name" value="RS_preATP-grasp-like"/>
    <property type="match status" value="1"/>
</dbReference>
<dbReference type="SUPFAM" id="SSF56059">
    <property type="entry name" value="Glutathione synthetase ATP-binding domain-like"/>
    <property type="match status" value="1"/>
</dbReference>
<dbReference type="SUPFAM" id="SSF52440">
    <property type="entry name" value="PreATP-grasp domain"/>
    <property type="match status" value="1"/>
</dbReference>
<dbReference type="SUPFAM" id="SSF51246">
    <property type="entry name" value="Rudiment single hybrid motif"/>
    <property type="match status" value="1"/>
</dbReference>
<dbReference type="PROSITE" id="PS50975">
    <property type="entry name" value="ATP_GRASP"/>
    <property type="match status" value="1"/>
</dbReference>